<accession>Q89WX9</accession>
<proteinExistence type="inferred from homology"/>
<name>FOLD_BRADU</name>
<reference key="1">
    <citation type="journal article" date="2002" name="DNA Res.">
        <title>Complete genomic sequence of nitrogen-fixing symbiotic bacterium Bradyrhizobium japonicum USDA110.</title>
        <authorList>
            <person name="Kaneko T."/>
            <person name="Nakamura Y."/>
            <person name="Sato S."/>
            <person name="Minamisawa K."/>
            <person name="Uchiumi T."/>
            <person name="Sasamoto S."/>
            <person name="Watanabe A."/>
            <person name="Idesawa K."/>
            <person name="Iriguchi M."/>
            <person name="Kawashima K."/>
            <person name="Kohara M."/>
            <person name="Matsumoto M."/>
            <person name="Shimpo S."/>
            <person name="Tsuruoka H."/>
            <person name="Wada T."/>
            <person name="Yamada M."/>
            <person name="Tabata S."/>
        </authorList>
    </citation>
    <scope>NUCLEOTIDE SEQUENCE [LARGE SCALE GENOMIC DNA]</scope>
    <source>
        <strain>JCM 10833 / BCRC 13528 / IAM 13628 / NBRC 14792 / USDA 110</strain>
    </source>
</reference>
<keyword id="KW-0028">Amino-acid biosynthesis</keyword>
<keyword id="KW-0368">Histidine biosynthesis</keyword>
<keyword id="KW-0378">Hydrolase</keyword>
<keyword id="KW-0486">Methionine biosynthesis</keyword>
<keyword id="KW-0511">Multifunctional enzyme</keyword>
<keyword id="KW-0521">NADP</keyword>
<keyword id="KW-0554">One-carbon metabolism</keyword>
<keyword id="KW-0560">Oxidoreductase</keyword>
<keyword id="KW-0658">Purine biosynthesis</keyword>
<keyword id="KW-1185">Reference proteome</keyword>
<gene>
    <name evidence="1" type="primary">folD</name>
    <name type="ordered locus">bll0549</name>
</gene>
<protein>
    <recommendedName>
        <fullName evidence="1">Bifunctional protein FolD</fullName>
    </recommendedName>
    <domain>
        <recommendedName>
            <fullName evidence="1">Methylenetetrahydrofolate dehydrogenase</fullName>
            <ecNumber evidence="1">1.5.1.5</ecNumber>
        </recommendedName>
    </domain>
    <domain>
        <recommendedName>
            <fullName evidence="1">Methenyltetrahydrofolate cyclohydrolase</fullName>
            <ecNumber evidence="1">3.5.4.9</ecNumber>
        </recommendedName>
    </domain>
</protein>
<feature type="chain" id="PRO_0000268292" description="Bifunctional protein FolD">
    <location>
        <begin position="1"/>
        <end position="294"/>
    </location>
</feature>
<feature type="binding site" evidence="1">
    <location>
        <begin position="166"/>
        <end position="168"/>
    </location>
    <ligand>
        <name>NADP(+)</name>
        <dbReference type="ChEBI" id="CHEBI:58349"/>
    </ligand>
</feature>
<feature type="binding site" evidence="1">
    <location>
        <position position="191"/>
    </location>
    <ligand>
        <name>NADP(+)</name>
        <dbReference type="ChEBI" id="CHEBI:58349"/>
    </ligand>
</feature>
<feature type="binding site" evidence="1">
    <location>
        <position position="232"/>
    </location>
    <ligand>
        <name>NADP(+)</name>
        <dbReference type="ChEBI" id="CHEBI:58349"/>
    </ligand>
</feature>
<comment type="function">
    <text evidence="1">Catalyzes the oxidation of 5,10-methylenetetrahydrofolate to 5,10-methenyltetrahydrofolate and then the hydrolysis of 5,10-methenyltetrahydrofolate to 10-formyltetrahydrofolate.</text>
</comment>
<comment type="catalytic activity">
    <reaction evidence="1">
        <text>(6R)-5,10-methylene-5,6,7,8-tetrahydrofolate + NADP(+) = (6R)-5,10-methenyltetrahydrofolate + NADPH</text>
        <dbReference type="Rhea" id="RHEA:22812"/>
        <dbReference type="ChEBI" id="CHEBI:15636"/>
        <dbReference type="ChEBI" id="CHEBI:57455"/>
        <dbReference type="ChEBI" id="CHEBI:57783"/>
        <dbReference type="ChEBI" id="CHEBI:58349"/>
        <dbReference type="EC" id="1.5.1.5"/>
    </reaction>
</comment>
<comment type="catalytic activity">
    <reaction evidence="1">
        <text>(6R)-5,10-methenyltetrahydrofolate + H2O = (6R)-10-formyltetrahydrofolate + H(+)</text>
        <dbReference type="Rhea" id="RHEA:23700"/>
        <dbReference type="ChEBI" id="CHEBI:15377"/>
        <dbReference type="ChEBI" id="CHEBI:15378"/>
        <dbReference type="ChEBI" id="CHEBI:57455"/>
        <dbReference type="ChEBI" id="CHEBI:195366"/>
        <dbReference type="EC" id="3.5.4.9"/>
    </reaction>
</comment>
<comment type="pathway">
    <text evidence="1">One-carbon metabolism; tetrahydrofolate interconversion.</text>
</comment>
<comment type="subunit">
    <text evidence="1">Homodimer.</text>
</comment>
<comment type="similarity">
    <text evidence="1">Belongs to the tetrahydrofolate dehydrogenase/cyclohydrolase family.</text>
</comment>
<sequence>MTAKIIDGKVIAADLRARVADEVARVKREHNLVPGLAVVLVGNDPASEVYVRSKGTQTQAAGMASFEHKLPADVSQADLLAVVAKLNRDPAVHGILVQLPLPKGLNTEAVINAIDPAKDVDGLHPNNAGRLAGGFEALSPCTPLGSIILTKSVHPSLEGLNAIVIGRSNLVGRPLVQLLLNENATVTIAHSRSRDLPGLVKRADLVYAAVGKPEMVRGDWLKPGATVIDIGISRIPKEDGKTRLVGDVAYQEALGVAGAITPVPGGVGQMTVACLLVNTLRAACAIAGLPKPAV</sequence>
<dbReference type="EC" id="1.5.1.5" evidence="1"/>
<dbReference type="EC" id="3.5.4.9" evidence="1"/>
<dbReference type="EMBL" id="BA000040">
    <property type="protein sequence ID" value="BAC45814.1"/>
    <property type="molecule type" value="Genomic_DNA"/>
</dbReference>
<dbReference type="RefSeq" id="NP_767189.1">
    <property type="nucleotide sequence ID" value="NC_004463.1"/>
</dbReference>
<dbReference type="RefSeq" id="WP_011083379.1">
    <property type="nucleotide sequence ID" value="NC_004463.1"/>
</dbReference>
<dbReference type="SMR" id="Q89WX9"/>
<dbReference type="FunCoup" id="Q89WX9">
    <property type="interactions" value="633"/>
</dbReference>
<dbReference type="STRING" id="224911.AAV28_42015"/>
<dbReference type="EnsemblBacteria" id="BAC45814">
    <property type="protein sequence ID" value="BAC45814"/>
    <property type="gene ID" value="BAC45814"/>
</dbReference>
<dbReference type="GeneID" id="46495693"/>
<dbReference type="KEGG" id="bja:bll0549"/>
<dbReference type="PATRIC" id="fig|224911.44.peg.9091"/>
<dbReference type="eggNOG" id="COG0190">
    <property type="taxonomic scope" value="Bacteria"/>
</dbReference>
<dbReference type="HOGENOM" id="CLU_034045_2_1_5"/>
<dbReference type="InParanoid" id="Q89WX9"/>
<dbReference type="OrthoDB" id="9803580at2"/>
<dbReference type="PhylomeDB" id="Q89WX9"/>
<dbReference type="UniPathway" id="UPA00193"/>
<dbReference type="Proteomes" id="UP000002526">
    <property type="component" value="Chromosome"/>
</dbReference>
<dbReference type="GO" id="GO:0005829">
    <property type="term" value="C:cytosol"/>
    <property type="evidence" value="ECO:0000318"/>
    <property type="project" value="GO_Central"/>
</dbReference>
<dbReference type="GO" id="GO:0004477">
    <property type="term" value="F:methenyltetrahydrofolate cyclohydrolase activity"/>
    <property type="evidence" value="ECO:0000318"/>
    <property type="project" value="GO_Central"/>
</dbReference>
<dbReference type="GO" id="GO:0004488">
    <property type="term" value="F:methylenetetrahydrofolate dehydrogenase (NADP+) activity"/>
    <property type="evidence" value="ECO:0000318"/>
    <property type="project" value="GO_Central"/>
</dbReference>
<dbReference type="GO" id="GO:0000105">
    <property type="term" value="P:L-histidine biosynthetic process"/>
    <property type="evidence" value="ECO:0007669"/>
    <property type="project" value="UniProtKB-KW"/>
</dbReference>
<dbReference type="GO" id="GO:0009086">
    <property type="term" value="P:methionine biosynthetic process"/>
    <property type="evidence" value="ECO:0007669"/>
    <property type="project" value="UniProtKB-KW"/>
</dbReference>
<dbReference type="GO" id="GO:0006164">
    <property type="term" value="P:purine nucleotide biosynthetic process"/>
    <property type="evidence" value="ECO:0007669"/>
    <property type="project" value="UniProtKB-KW"/>
</dbReference>
<dbReference type="GO" id="GO:0035999">
    <property type="term" value="P:tetrahydrofolate interconversion"/>
    <property type="evidence" value="ECO:0000318"/>
    <property type="project" value="GO_Central"/>
</dbReference>
<dbReference type="CDD" id="cd01080">
    <property type="entry name" value="NAD_bind_m-THF_DH_Cyclohyd"/>
    <property type="match status" value="1"/>
</dbReference>
<dbReference type="FunFam" id="3.40.50.720:FF:000094">
    <property type="entry name" value="Bifunctional protein FolD"/>
    <property type="match status" value="1"/>
</dbReference>
<dbReference type="FunFam" id="3.40.50.10860:FF:000005">
    <property type="entry name" value="C-1-tetrahydrofolate synthase, cytoplasmic, putative"/>
    <property type="match status" value="1"/>
</dbReference>
<dbReference type="Gene3D" id="3.40.50.10860">
    <property type="entry name" value="Leucine Dehydrogenase, chain A, domain 1"/>
    <property type="match status" value="1"/>
</dbReference>
<dbReference type="Gene3D" id="3.40.50.720">
    <property type="entry name" value="NAD(P)-binding Rossmann-like Domain"/>
    <property type="match status" value="1"/>
</dbReference>
<dbReference type="HAMAP" id="MF_01576">
    <property type="entry name" value="THF_DHG_CYH"/>
    <property type="match status" value="1"/>
</dbReference>
<dbReference type="InterPro" id="IPR046346">
    <property type="entry name" value="Aminoacid_DH-like_N_sf"/>
</dbReference>
<dbReference type="InterPro" id="IPR036291">
    <property type="entry name" value="NAD(P)-bd_dom_sf"/>
</dbReference>
<dbReference type="InterPro" id="IPR000672">
    <property type="entry name" value="THF_DH/CycHdrlase"/>
</dbReference>
<dbReference type="InterPro" id="IPR020630">
    <property type="entry name" value="THF_DH/CycHdrlase_cat_dom"/>
</dbReference>
<dbReference type="InterPro" id="IPR020867">
    <property type="entry name" value="THF_DH/CycHdrlase_CS"/>
</dbReference>
<dbReference type="InterPro" id="IPR020631">
    <property type="entry name" value="THF_DH/CycHdrlase_NAD-bd_dom"/>
</dbReference>
<dbReference type="NCBIfam" id="NF010785">
    <property type="entry name" value="PRK14188.1"/>
    <property type="match status" value="1"/>
</dbReference>
<dbReference type="PANTHER" id="PTHR48099:SF5">
    <property type="entry name" value="C-1-TETRAHYDROFOLATE SYNTHASE, CYTOPLASMIC"/>
    <property type="match status" value="1"/>
</dbReference>
<dbReference type="PANTHER" id="PTHR48099">
    <property type="entry name" value="C-1-TETRAHYDROFOLATE SYNTHASE, CYTOPLASMIC-RELATED"/>
    <property type="match status" value="1"/>
</dbReference>
<dbReference type="Pfam" id="PF00763">
    <property type="entry name" value="THF_DHG_CYH"/>
    <property type="match status" value="1"/>
</dbReference>
<dbReference type="Pfam" id="PF02882">
    <property type="entry name" value="THF_DHG_CYH_C"/>
    <property type="match status" value="1"/>
</dbReference>
<dbReference type="PRINTS" id="PR00085">
    <property type="entry name" value="THFDHDRGNASE"/>
</dbReference>
<dbReference type="SUPFAM" id="SSF53223">
    <property type="entry name" value="Aminoacid dehydrogenase-like, N-terminal domain"/>
    <property type="match status" value="1"/>
</dbReference>
<dbReference type="SUPFAM" id="SSF51735">
    <property type="entry name" value="NAD(P)-binding Rossmann-fold domains"/>
    <property type="match status" value="1"/>
</dbReference>
<dbReference type="PROSITE" id="PS00766">
    <property type="entry name" value="THF_DHG_CYH_1"/>
    <property type="match status" value="1"/>
</dbReference>
<organism>
    <name type="scientific">Bradyrhizobium diazoefficiens (strain JCM 10833 / BCRC 13528 / IAM 13628 / NBRC 14792 / USDA 110)</name>
    <dbReference type="NCBI Taxonomy" id="224911"/>
    <lineage>
        <taxon>Bacteria</taxon>
        <taxon>Pseudomonadati</taxon>
        <taxon>Pseudomonadota</taxon>
        <taxon>Alphaproteobacteria</taxon>
        <taxon>Hyphomicrobiales</taxon>
        <taxon>Nitrobacteraceae</taxon>
        <taxon>Bradyrhizobium</taxon>
    </lineage>
</organism>
<evidence type="ECO:0000255" key="1">
    <source>
        <dbReference type="HAMAP-Rule" id="MF_01576"/>
    </source>
</evidence>